<organism>
    <name type="scientific">Yersinia pseudotuberculosis serotype IB (strain PB1/+)</name>
    <dbReference type="NCBI Taxonomy" id="502801"/>
    <lineage>
        <taxon>Bacteria</taxon>
        <taxon>Pseudomonadati</taxon>
        <taxon>Pseudomonadota</taxon>
        <taxon>Gammaproteobacteria</taxon>
        <taxon>Enterobacterales</taxon>
        <taxon>Yersiniaceae</taxon>
        <taxon>Yersinia</taxon>
    </lineage>
</organism>
<feature type="chain" id="PRO_1000146663" description="Sulfite reductase [NADPH] hemoprotein beta-component">
    <location>
        <begin position="1"/>
        <end position="576"/>
    </location>
</feature>
<feature type="binding site" evidence="1">
    <location>
        <position position="435"/>
    </location>
    <ligand>
        <name>[4Fe-4S] cluster</name>
        <dbReference type="ChEBI" id="CHEBI:49883"/>
    </ligand>
</feature>
<feature type="binding site" evidence="1">
    <location>
        <position position="441"/>
    </location>
    <ligand>
        <name>[4Fe-4S] cluster</name>
        <dbReference type="ChEBI" id="CHEBI:49883"/>
    </ligand>
</feature>
<feature type="binding site" evidence="1">
    <location>
        <position position="480"/>
    </location>
    <ligand>
        <name>[4Fe-4S] cluster</name>
        <dbReference type="ChEBI" id="CHEBI:49883"/>
    </ligand>
</feature>
<feature type="binding site" evidence="1">
    <location>
        <position position="484"/>
    </location>
    <ligand>
        <name>[4Fe-4S] cluster</name>
        <dbReference type="ChEBI" id="CHEBI:49883"/>
    </ligand>
</feature>
<feature type="binding site" description="axial binding residue" evidence="1">
    <location>
        <position position="484"/>
    </location>
    <ligand>
        <name>siroheme</name>
        <dbReference type="ChEBI" id="CHEBI:60052"/>
    </ligand>
    <ligandPart>
        <name>Fe</name>
        <dbReference type="ChEBI" id="CHEBI:18248"/>
    </ligandPart>
</feature>
<accession>B2K566</accession>
<proteinExistence type="inferred from homology"/>
<dbReference type="EC" id="1.8.1.2" evidence="1"/>
<dbReference type="EMBL" id="CP001048">
    <property type="protein sequence ID" value="ACC87777.1"/>
    <property type="molecule type" value="Genomic_DNA"/>
</dbReference>
<dbReference type="RefSeq" id="WP_011191773.1">
    <property type="nucleotide sequence ID" value="NZ_CP009780.1"/>
</dbReference>
<dbReference type="SMR" id="B2K566"/>
<dbReference type="GeneID" id="49787234"/>
<dbReference type="KEGG" id="ypb:YPTS_0793"/>
<dbReference type="PATRIC" id="fig|502801.10.peg.125"/>
<dbReference type="UniPathway" id="UPA00140">
    <property type="reaction ID" value="UER00207"/>
</dbReference>
<dbReference type="GO" id="GO:0009337">
    <property type="term" value="C:sulfite reductase complex (NADPH)"/>
    <property type="evidence" value="ECO:0007669"/>
    <property type="project" value="InterPro"/>
</dbReference>
<dbReference type="GO" id="GO:0051539">
    <property type="term" value="F:4 iron, 4 sulfur cluster binding"/>
    <property type="evidence" value="ECO:0007669"/>
    <property type="project" value="UniProtKB-KW"/>
</dbReference>
<dbReference type="GO" id="GO:0020037">
    <property type="term" value="F:heme binding"/>
    <property type="evidence" value="ECO:0007669"/>
    <property type="project" value="InterPro"/>
</dbReference>
<dbReference type="GO" id="GO:0046872">
    <property type="term" value="F:metal ion binding"/>
    <property type="evidence" value="ECO:0007669"/>
    <property type="project" value="UniProtKB-KW"/>
</dbReference>
<dbReference type="GO" id="GO:0050661">
    <property type="term" value="F:NADP binding"/>
    <property type="evidence" value="ECO:0007669"/>
    <property type="project" value="InterPro"/>
</dbReference>
<dbReference type="GO" id="GO:0050311">
    <property type="term" value="F:sulfite reductase (ferredoxin) activity"/>
    <property type="evidence" value="ECO:0007669"/>
    <property type="project" value="TreeGrafter"/>
</dbReference>
<dbReference type="GO" id="GO:0004783">
    <property type="term" value="F:sulfite reductase (NADPH) activity"/>
    <property type="evidence" value="ECO:0007669"/>
    <property type="project" value="UniProtKB-UniRule"/>
</dbReference>
<dbReference type="GO" id="GO:0019344">
    <property type="term" value="P:cysteine biosynthetic process"/>
    <property type="evidence" value="ECO:0007669"/>
    <property type="project" value="UniProtKB-KW"/>
</dbReference>
<dbReference type="GO" id="GO:0070814">
    <property type="term" value="P:hydrogen sulfide biosynthetic process"/>
    <property type="evidence" value="ECO:0007669"/>
    <property type="project" value="UniProtKB-UniRule"/>
</dbReference>
<dbReference type="GO" id="GO:0000103">
    <property type="term" value="P:sulfate assimilation"/>
    <property type="evidence" value="ECO:0007669"/>
    <property type="project" value="UniProtKB-UniRule"/>
</dbReference>
<dbReference type="FunFam" id="3.30.413.10:FF:000003">
    <property type="entry name" value="Sulfite reductase [NADPH] hemoprotein beta-component"/>
    <property type="match status" value="1"/>
</dbReference>
<dbReference type="FunFam" id="3.30.413.10:FF:000004">
    <property type="entry name" value="Sulfite reductase [NADPH] hemoprotein beta-component"/>
    <property type="match status" value="1"/>
</dbReference>
<dbReference type="Gene3D" id="3.30.413.10">
    <property type="entry name" value="Sulfite Reductase Hemoprotein, domain 1"/>
    <property type="match status" value="2"/>
</dbReference>
<dbReference type="HAMAP" id="MF_01540">
    <property type="entry name" value="CysI"/>
    <property type="match status" value="1"/>
</dbReference>
<dbReference type="InterPro" id="IPR011786">
    <property type="entry name" value="CysI"/>
</dbReference>
<dbReference type="InterPro" id="IPR005117">
    <property type="entry name" value="NiRdtase/SiRdtase_haem-b_fer"/>
</dbReference>
<dbReference type="InterPro" id="IPR036136">
    <property type="entry name" value="Nit/Sulf_reduc_fer-like_dom_sf"/>
</dbReference>
<dbReference type="InterPro" id="IPR006067">
    <property type="entry name" value="NO2/SO3_Rdtase_4Fe4S_dom"/>
</dbReference>
<dbReference type="InterPro" id="IPR045169">
    <property type="entry name" value="NO2/SO3_Rdtase_4Fe4S_prot"/>
</dbReference>
<dbReference type="InterPro" id="IPR045854">
    <property type="entry name" value="NO2/SO3_Rdtase_4Fe4S_sf"/>
</dbReference>
<dbReference type="InterPro" id="IPR006066">
    <property type="entry name" value="NO2/SO3_Rdtase_FeS/sirohaem_BS"/>
</dbReference>
<dbReference type="NCBIfam" id="TIGR02041">
    <property type="entry name" value="CysI"/>
    <property type="match status" value="1"/>
</dbReference>
<dbReference type="NCBIfam" id="NF010029">
    <property type="entry name" value="PRK13504.1"/>
    <property type="match status" value="1"/>
</dbReference>
<dbReference type="PANTHER" id="PTHR11493:SF47">
    <property type="entry name" value="SULFITE REDUCTASE [NADPH] SUBUNIT BETA"/>
    <property type="match status" value="1"/>
</dbReference>
<dbReference type="PANTHER" id="PTHR11493">
    <property type="entry name" value="SULFITE REDUCTASE [NADPH] SUBUNIT BETA-RELATED"/>
    <property type="match status" value="1"/>
</dbReference>
<dbReference type="Pfam" id="PF01077">
    <property type="entry name" value="NIR_SIR"/>
    <property type="match status" value="1"/>
</dbReference>
<dbReference type="Pfam" id="PF03460">
    <property type="entry name" value="NIR_SIR_ferr"/>
    <property type="match status" value="2"/>
</dbReference>
<dbReference type="PRINTS" id="PR00397">
    <property type="entry name" value="SIROHAEM"/>
</dbReference>
<dbReference type="SUPFAM" id="SSF56014">
    <property type="entry name" value="Nitrite and sulphite reductase 4Fe-4S domain-like"/>
    <property type="match status" value="2"/>
</dbReference>
<dbReference type="SUPFAM" id="SSF55124">
    <property type="entry name" value="Nitrite/Sulfite reductase N-terminal domain-like"/>
    <property type="match status" value="2"/>
</dbReference>
<dbReference type="PROSITE" id="PS00365">
    <property type="entry name" value="NIR_SIR"/>
    <property type="match status" value="1"/>
</dbReference>
<keyword id="KW-0004">4Fe-4S</keyword>
<keyword id="KW-0028">Amino-acid biosynthesis</keyword>
<keyword id="KW-0198">Cysteine biosynthesis</keyword>
<keyword id="KW-0349">Heme</keyword>
<keyword id="KW-0408">Iron</keyword>
<keyword id="KW-0411">Iron-sulfur</keyword>
<keyword id="KW-0479">Metal-binding</keyword>
<keyword id="KW-0521">NADP</keyword>
<keyword id="KW-0560">Oxidoreductase</keyword>
<sequence>MNEKHPGPLVVSGKLSDGERMKSESNFLRGTIAEDLNNGLTGGFSGDNFLLIRFHGMYQQDDRDIRAERAEQKLEPRHAMMLRCRLPGGIITPQQWLGIDKFAADNTLYGSIRITNRQTFQFHGILKGNVKPAHQLLNELGLDALATANDVNRNVLCTSNPVESALHQEAYEWAKKISEHLLPRTRAYAEIWLDAEKVATTDEEPILGATYLPRKFKTTVVIPPQNDVDLHANDLNFVAVADKGKLIGFNVLVGGGLSIAHGDKNTYPRKASEFGYIPLKHTLAIAEAVVTTQRDWGNRTDRKNAKTKYTLERVGVETFKAEVEKRAGVSFSAIKPYQFTGRGDRIGWVKGVDKKWHLTLFIENGRLLDYPGRSLKTGVAEIAKIHQGDFRLTANQNLIVAGVPEKDKARIEALAREHGLMDDHVTSQRENSMACVSFPTCPLAMAEAERFLPEFVTRVEGILQQHGLADEHIVLRVTGCPNGCGRALLAEVGLVGKAVGRYNLHLGGNREGTRIPRMYRENITADEILLITDQLVGRWAKERHVDEGFGDFVIRAGVIAPVIDSARDFYDVQEAM</sequence>
<reference key="1">
    <citation type="submission" date="2008-04" db="EMBL/GenBank/DDBJ databases">
        <title>Complete sequence of Yersinia pseudotuberculosis PB1/+.</title>
        <authorList>
            <person name="Copeland A."/>
            <person name="Lucas S."/>
            <person name="Lapidus A."/>
            <person name="Glavina del Rio T."/>
            <person name="Dalin E."/>
            <person name="Tice H."/>
            <person name="Bruce D."/>
            <person name="Goodwin L."/>
            <person name="Pitluck S."/>
            <person name="Munk A.C."/>
            <person name="Brettin T."/>
            <person name="Detter J.C."/>
            <person name="Han C."/>
            <person name="Tapia R."/>
            <person name="Schmutz J."/>
            <person name="Larimer F."/>
            <person name="Land M."/>
            <person name="Hauser L."/>
            <person name="Challacombe J.F."/>
            <person name="Green L."/>
            <person name="Lindler L.E."/>
            <person name="Nikolich M.P."/>
            <person name="Richardson P."/>
        </authorList>
    </citation>
    <scope>NUCLEOTIDE SEQUENCE [LARGE SCALE GENOMIC DNA]</scope>
    <source>
        <strain>PB1/+</strain>
    </source>
</reference>
<gene>
    <name evidence="1" type="primary">cysI</name>
    <name type="ordered locus">YPTS_0793</name>
</gene>
<name>CYSI_YERPB</name>
<evidence type="ECO:0000255" key="1">
    <source>
        <dbReference type="HAMAP-Rule" id="MF_01540"/>
    </source>
</evidence>
<comment type="function">
    <text evidence="1">Component of the sulfite reductase complex that catalyzes the 6-electron reduction of sulfite to sulfide. This is one of several activities required for the biosynthesis of L-cysteine from sulfate.</text>
</comment>
<comment type="catalytic activity">
    <reaction evidence="1">
        <text>hydrogen sulfide + 3 NADP(+) + 3 H2O = sulfite + 3 NADPH + 4 H(+)</text>
        <dbReference type="Rhea" id="RHEA:13801"/>
        <dbReference type="ChEBI" id="CHEBI:15377"/>
        <dbReference type="ChEBI" id="CHEBI:15378"/>
        <dbReference type="ChEBI" id="CHEBI:17359"/>
        <dbReference type="ChEBI" id="CHEBI:29919"/>
        <dbReference type="ChEBI" id="CHEBI:57783"/>
        <dbReference type="ChEBI" id="CHEBI:58349"/>
        <dbReference type="EC" id="1.8.1.2"/>
    </reaction>
</comment>
<comment type="cofactor">
    <cofactor evidence="1">
        <name>siroheme</name>
        <dbReference type="ChEBI" id="CHEBI:60052"/>
    </cofactor>
    <text evidence="1">Binds 1 siroheme per subunit.</text>
</comment>
<comment type="cofactor">
    <cofactor evidence="1">
        <name>[4Fe-4S] cluster</name>
        <dbReference type="ChEBI" id="CHEBI:49883"/>
    </cofactor>
    <text evidence="1">Binds 1 [4Fe-4S] cluster per subunit.</text>
</comment>
<comment type="pathway">
    <text evidence="1">Sulfur metabolism; hydrogen sulfide biosynthesis; hydrogen sulfide from sulfite (NADPH route): step 1/1.</text>
</comment>
<comment type="subunit">
    <text evidence="1">Alpha(8)-beta(8). The alpha component is a flavoprotein, the beta component is a hemoprotein.</text>
</comment>
<comment type="similarity">
    <text evidence="1">Belongs to the nitrite and sulfite reductase 4Fe-4S domain family.</text>
</comment>
<protein>
    <recommendedName>
        <fullName evidence="1">Sulfite reductase [NADPH] hemoprotein beta-component</fullName>
        <shortName evidence="1">SiR-HP</shortName>
        <shortName evidence="1">SiRHP</shortName>
        <ecNumber evidence="1">1.8.1.2</ecNumber>
    </recommendedName>
</protein>